<feature type="chain" id="PRO_0000456876" description="FLYWCH-type zinc finger-containing protein peb-1">
    <location>
        <begin position="1"/>
        <end position="443"/>
    </location>
</feature>
<feature type="DNA-binding region" description="Required for DNA-binding" evidence="3">
    <location>
        <begin position="46"/>
        <end position="203"/>
    </location>
</feature>
<feature type="zinc finger region" description="FLYWCH-type" evidence="1">
    <location>
        <begin position="69"/>
        <end position="135"/>
    </location>
</feature>
<feature type="region of interest" description="Disordered" evidence="2">
    <location>
        <begin position="22"/>
        <end position="49"/>
    </location>
</feature>
<feature type="region of interest" description="Disordered" evidence="2">
    <location>
        <begin position="251"/>
        <end position="271"/>
    </location>
</feature>
<feature type="compositionally biased region" description="Low complexity" evidence="2">
    <location>
        <begin position="25"/>
        <end position="42"/>
    </location>
</feature>
<feature type="splice variant" id="VSP_061716" description="In isoform b." evidence="7">
    <location>
        <begin position="1"/>
        <end position="171"/>
    </location>
</feature>
<feature type="splice variant" id="VSP_061717" description="In isoform a." evidence="7">
    <location>
        <begin position="1"/>
        <end position="16"/>
    </location>
</feature>
<feature type="mutagenesis site" description="Abolishes DNA binding. Becomes localized to both cytoplasm and nucleus." evidence="5">
    <original>WRC</original>
    <variation>ARA</variation>
    <location>
        <begin position="100"/>
        <end position="102"/>
    </location>
</feature>
<feature type="mutagenesis site" description="Abolishes DNA binding. Becomes localized to both cytoplasm and nucleus." evidence="5">
    <original>C</original>
    <variation>A</variation>
    <location>
        <position position="114"/>
    </location>
</feature>
<feature type="mutagenesis site" description="Abolishes DNA binding. Becomes localized to both cytoplasm and nucleus." evidence="5">
    <original>HNH</original>
    <variation>ANA</variation>
    <location>
        <begin position="133"/>
        <end position="135"/>
    </location>
</feature>
<protein>
    <recommendedName>
        <fullName evidence="7">FLYWCH-type zinc finger-containing protein peb-1</fullName>
    </recommendedName>
    <alternativeName>
        <fullName evidence="13">Pharyngeal enhancer binding protein peb-1</fullName>
    </alternativeName>
</protein>
<keyword id="KW-0025">Alternative splicing</keyword>
<keyword id="KW-0217">Developmental protein</keyword>
<keyword id="KW-0238">DNA-binding</keyword>
<keyword id="KW-0479">Metal-binding</keyword>
<keyword id="KW-0539">Nucleus</keyword>
<keyword id="KW-1185">Reference proteome</keyword>
<keyword id="KW-0804">Transcription</keyword>
<keyword id="KW-0805">Transcription regulation</keyword>
<keyword id="KW-0862">Zinc</keyword>
<keyword id="KW-0863">Zinc-finger</keyword>
<reference evidence="9" key="1">
    <citation type="journal article" date="2001" name="Dev. Biol.">
        <title>The Caenorhabditis elegans peb-1 gene encodes a novel DNA-binding protein involved in morphogenesis of the pharynx, vulva, and hindgut.</title>
        <authorList>
            <person name="Thatcher J.D."/>
            <person name="Fernandez A.P."/>
            <person name="Beaster-Jones L."/>
            <person name="Haun C."/>
            <person name="Okkema P.G."/>
        </authorList>
    </citation>
    <scope>NUCLEOTIDE SEQUENCE [MRNA] OF 19-443</scope>
    <scope>FUNCTION</scope>
    <scope>SUBCELLULAR LOCATION</scope>
    <scope>DEVELOPMENTAL STAGE</scope>
    <scope>DISRUPTION PHENOTYPE</scope>
    <source>
        <strain evidence="9">Bristol N2</strain>
    </source>
</reference>
<reference evidence="10" key="2">
    <citation type="journal article" date="1998" name="Science">
        <title>Genome sequence of the nematode C. elegans: a platform for investigating biology.</title>
        <authorList>
            <consortium name="The C. elegans sequencing consortium"/>
        </authorList>
    </citation>
    <scope>NUCLEOTIDE SEQUENCE [LARGE SCALE GENOMIC DNA]</scope>
    <source>
        <strain evidence="10">Bristol N2</strain>
    </source>
</reference>
<reference evidence="7" key="3">
    <citation type="journal article" date="2002" name="J. Mol. Biol.">
        <title>Interference between the PHA-4 and PEB-1 transcription factors in formation of the Caenorhabditis elegans pharynx.</title>
        <authorList>
            <person name="Kalb J.M."/>
            <person name="Beaster-Jones L."/>
            <person name="Fernandez A.P."/>
            <person name="Okkema P.G."/>
            <person name="Goszczynski B."/>
            <person name="McGhee J.D."/>
        </authorList>
    </citation>
    <scope>FUNCTION</scope>
</reference>
<reference evidence="7" key="4">
    <citation type="journal article" date="2004" name="J. Mol. Biol.">
        <title>DNA binding and in vivo function of C.elegans PEB-1 require a conserved FLYWCH motif.</title>
        <authorList>
            <person name="Beaster-Jones L."/>
            <person name="Okkema P.G."/>
        </authorList>
    </citation>
    <scope>FUNCTION</scope>
    <scope>SUBCELLULAR LOCATION</scope>
    <scope>MUTAGENESIS OF 100-TRP--CYS-102; CYS-114 AND 133-HIS--HIS-135</scope>
</reference>
<reference evidence="7" key="5">
    <citation type="journal article" date="2004" name="Dev. Biol.">
        <title>C. elegans peb-1 mutants exhibit pleiotropic defects in molting, feeding, and morphology.</title>
        <authorList>
            <person name="Fernandez A.P."/>
            <person name="Gibbons J."/>
            <person name="Okkema P.G."/>
        </authorList>
    </citation>
    <scope>FUNCTION</scope>
    <scope>DEVELOPMENTAL STAGE</scope>
</reference>
<gene>
    <name evidence="13" type="primary">peb-1</name>
    <name evidence="13" type="ORF">T14F9.4</name>
</gene>
<dbReference type="EMBL" id="AF160187">
    <property type="protein sequence ID" value="AAD42897.1"/>
    <property type="molecule type" value="mRNA"/>
</dbReference>
<dbReference type="EMBL" id="BX284606">
    <property type="protein sequence ID" value="CAA0061095.1"/>
    <property type="molecule type" value="Genomic_DNA"/>
</dbReference>
<dbReference type="EMBL" id="BX284606">
    <property type="protein sequence ID" value="CCD68942.1"/>
    <property type="molecule type" value="Genomic_DNA"/>
</dbReference>
<dbReference type="EMBL" id="BX284606">
    <property type="protein sequence ID" value="CCD68943.2"/>
    <property type="molecule type" value="Genomic_DNA"/>
</dbReference>
<dbReference type="RefSeq" id="NP_001024910.1">
    <molecule id="A0A5S9MMK5-2"/>
    <property type="nucleotide sequence ID" value="NM_001029739.6"/>
</dbReference>
<dbReference type="RefSeq" id="NP_001024911.2">
    <property type="nucleotide sequence ID" value="NM_001029740.2"/>
</dbReference>
<dbReference type="RefSeq" id="NP_001364564.1">
    <molecule id="A0A5S9MMK5-1"/>
    <property type="nucleotide sequence ID" value="NM_001377612.2"/>
</dbReference>
<dbReference type="RefSeq" id="NP_001364745.1">
    <molecule id="A0A5S9MMK5-3"/>
    <property type="nucleotide sequence ID" value="NM_001377613.2"/>
</dbReference>
<dbReference type="FunCoup" id="A0A5S9MMK5">
    <property type="interactions" value="1434"/>
</dbReference>
<dbReference type="IntAct" id="A0A5S9MMK5">
    <property type="interactions" value="20"/>
</dbReference>
<dbReference type="STRING" id="6239.T14F9.4a.1"/>
<dbReference type="PaxDb" id="6239-T14F9.4a"/>
<dbReference type="EnsemblMetazoa" id="T14F9.4a.1">
    <molecule id="A0A5S9MMK5-2"/>
    <property type="protein sequence ID" value="T14F9.4a.1"/>
    <property type="gene ID" value="WBGene00003968"/>
</dbReference>
<dbReference type="EnsemblMetazoa" id="T14F9.4b.1">
    <molecule id="A0A5S9MMK5-3"/>
    <property type="protein sequence ID" value="T14F9.4b.1"/>
    <property type="gene ID" value="WBGene00003968"/>
</dbReference>
<dbReference type="EnsemblMetazoa" id="T14F9.4c.1">
    <molecule id="A0A5S9MMK5-1"/>
    <property type="protein sequence ID" value="T14F9.4c.1"/>
    <property type="gene ID" value="WBGene00003968"/>
</dbReference>
<dbReference type="GeneID" id="180532"/>
<dbReference type="KEGG" id="cel:CELE_T14F9.4"/>
<dbReference type="UCSC" id="T14F9.4a">
    <property type="organism name" value="c. elegans"/>
</dbReference>
<dbReference type="AGR" id="WB:WBGene00003968"/>
<dbReference type="CTD" id="180532"/>
<dbReference type="WormBase" id="T14F9.4a">
    <molecule id="A0A5S9MMK5-2"/>
    <property type="protein sequence ID" value="CE07500"/>
    <property type="gene ID" value="WBGene00003968"/>
    <property type="gene designation" value="peb-1"/>
</dbReference>
<dbReference type="WormBase" id="T14F9.4b">
    <molecule id="A0A5S9MMK5-3"/>
    <property type="protein sequence ID" value="CE48479"/>
    <property type="gene ID" value="WBGene00003968"/>
    <property type="gene designation" value="peb-1"/>
</dbReference>
<dbReference type="WormBase" id="T14F9.4c">
    <molecule id="A0A5S9MMK5-1"/>
    <property type="protein sequence ID" value="CE53821"/>
    <property type="gene ID" value="WBGene00003968"/>
    <property type="gene designation" value="peb-1"/>
</dbReference>
<dbReference type="eggNOG" id="ENOG502SRUM">
    <property type="taxonomic scope" value="Eukaryota"/>
</dbReference>
<dbReference type="HOGENOM" id="CLU_642881_0_0_1"/>
<dbReference type="InParanoid" id="A0A5S9MMK5"/>
<dbReference type="OMA" id="VIRICCC"/>
<dbReference type="OrthoDB" id="5820059at2759"/>
<dbReference type="PRO" id="PR:A0A5S9MMK5"/>
<dbReference type="Proteomes" id="UP000001940">
    <property type="component" value="Chromosome X"/>
</dbReference>
<dbReference type="Bgee" id="WBGene00003968">
    <property type="expression patterns" value="Expressed in pharyngeal muscle cell (C elegans) and 5 other cell types or tissues"/>
</dbReference>
<dbReference type="ExpressionAtlas" id="A0A5S9MMK5">
    <property type="expression patterns" value="baseline and differential"/>
</dbReference>
<dbReference type="GO" id="GO:0005634">
    <property type="term" value="C:nucleus"/>
    <property type="evidence" value="ECO:0000314"/>
    <property type="project" value="UniProtKB"/>
</dbReference>
<dbReference type="GO" id="GO:0000978">
    <property type="term" value="F:RNA polymerase II cis-regulatory region sequence-specific DNA binding"/>
    <property type="evidence" value="ECO:0000314"/>
    <property type="project" value="UniProtKB"/>
</dbReference>
<dbReference type="GO" id="GO:0008270">
    <property type="term" value="F:zinc ion binding"/>
    <property type="evidence" value="ECO:0007669"/>
    <property type="project" value="UniProtKB-KW"/>
</dbReference>
<dbReference type="GO" id="GO:0000122">
    <property type="term" value="P:negative regulation of transcription by RNA polymerase II"/>
    <property type="evidence" value="ECO:0000316"/>
    <property type="project" value="UniProtKB"/>
</dbReference>
<dbReference type="GO" id="GO:0045944">
    <property type="term" value="P:positive regulation of transcription by RNA polymerase II"/>
    <property type="evidence" value="ECO:0000314"/>
    <property type="project" value="UniProtKB"/>
</dbReference>
<dbReference type="Gene3D" id="2.20.25.240">
    <property type="match status" value="1"/>
</dbReference>
<dbReference type="InterPro" id="IPR007588">
    <property type="entry name" value="Znf_FLYWCH"/>
</dbReference>
<dbReference type="Pfam" id="PF04500">
    <property type="entry name" value="FLYWCH"/>
    <property type="match status" value="1"/>
</dbReference>
<name>FPEB1_CAEEL</name>
<sequence length="443" mass="49148">MMTTTVQKNCWRLDQTMLGLEKPGSSDISSSSTDTSAISPISVSSMPLSPDKEKKKISFVRYNPDIPQIVTSFKGYQKLMYQGYRYNIYQIAPERNFKSWRCVCAKKMHDGQWCKCRAETTMDNKNACTKGSHNHPPRHHVAEIEFIKSQLYSAALENPDHDAGDLVNQASMYLSDGVMFDNKESIKKSLVVARNKDGKPKKPRSKRMMKFEVDDDDENEYKMPKLETDISCFLPFINNMVKVEPPFSHTPTIQIPQPIPTPIQHQQQEQSNLLQPATLNGMNNPWMGMEDHLAMIWAANAMLNPGLDVLSTIAALSKHQQHVQGPSPQQAATAPTTASLSSNLSVSSFTPQMPKEASIAIPAPLQVLNLKDLKPLPPLANIQTSPVIQAANLLLPVAALKKDSSTQTTEEIKVSQCLTSGCGCRVIRICCCDEGVCRRTAAC</sequence>
<evidence type="ECO:0000255" key="1"/>
<evidence type="ECO:0000256" key="2">
    <source>
        <dbReference type="SAM" id="MobiDB-lite"/>
    </source>
</evidence>
<evidence type="ECO:0000269" key="3">
    <source>
    </source>
</evidence>
<evidence type="ECO:0000269" key="4">
    <source>
    </source>
</evidence>
<evidence type="ECO:0000269" key="5">
    <source>
    </source>
</evidence>
<evidence type="ECO:0000269" key="6">
    <source>
    </source>
</evidence>
<evidence type="ECO:0000305" key="7"/>
<evidence type="ECO:0000305" key="8">
    <source>
    </source>
</evidence>
<evidence type="ECO:0000312" key="9">
    <source>
        <dbReference type="EMBL" id="AAD42897.1"/>
    </source>
</evidence>
<evidence type="ECO:0000312" key="10">
    <source>
        <dbReference type="Proteomes" id="UP000001940"/>
    </source>
</evidence>
<evidence type="ECO:0000312" key="11">
    <source>
        <dbReference type="WormBase" id="T14F9.4a"/>
    </source>
</evidence>
<evidence type="ECO:0000312" key="12">
    <source>
        <dbReference type="WormBase" id="T14F9.4b"/>
    </source>
</evidence>
<evidence type="ECO:0000312" key="13">
    <source>
        <dbReference type="WormBase" id="T14F9.4c"/>
    </source>
</evidence>
<proteinExistence type="evidence at protein level"/>
<organism evidence="10">
    <name type="scientific">Caenorhabditis elegans</name>
    <dbReference type="NCBI Taxonomy" id="6239"/>
    <lineage>
        <taxon>Eukaryota</taxon>
        <taxon>Metazoa</taxon>
        <taxon>Ecdysozoa</taxon>
        <taxon>Nematoda</taxon>
        <taxon>Chromadorea</taxon>
        <taxon>Rhabditida</taxon>
        <taxon>Rhabditina</taxon>
        <taxon>Rhabditomorpha</taxon>
        <taxon>Rhabditoidea</taxon>
        <taxon>Rhabditidae</taxon>
        <taxon>Peloderinae</taxon>
        <taxon>Caenorhabditis</taxon>
    </lineage>
</organism>
<comment type="function">
    <text evidence="3 4 5 6">Putative transcription factor (PubMed:11203704). Binds to specific sequence motif 5'-[TC][AGT]TGCC[GA][AT]-3' in regulatory elements of target genes such as myosin myo-2 (PubMed:11203704, PubMed:15165844). May modulate gene expression, perhaps acting in opposition to transcription factor pha-4 (PubMed:11203704, PubMed:12095247). Involved in morphogenesis, perhaps especially in formation of the pharynx (PubMed:11203704, PubMed:15581870). Plays roles in molting, feeding and morphology (PubMed:15581870).</text>
</comment>
<comment type="subcellular location">
    <subcellularLocation>
        <location evidence="3 5">Nucleus</location>
    </subcellularLocation>
    <text evidence="5">Localization to nucleus dependent, in part, on FLYWCH-type domain.</text>
</comment>
<comment type="alternative products">
    <event type="alternative splicing"/>
    <isoform>
        <id>A0A5S9MMK5-1</id>
        <name evidence="13">c</name>
        <sequence type="displayed"/>
    </isoform>
    <isoform>
        <id>A0A5S9MMK5-2</id>
        <name evidence="11">a</name>
        <sequence type="described" ref="VSP_061717"/>
    </isoform>
    <isoform>
        <id>A0A5S9MMK5-3</id>
        <name evidence="12">b</name>
        <sequence type="described" ref="VSP_061716"/>
    </isoform>
</comment>
<comment type="developmental stage">
    <text evidence="3 6">Expressed widely throughout development (at protein level) (PubMed:11203704). Earliest expression at the embryonic comma stage; expressed in the developing pharynx, hypodermal cells, hindgut lining, and also in several cells near the rectum and in the tail (at protein level) (PubMed:11203704, PubMed:15581870). Expressed in pharynx until adulthood, when it becomes undetectable (at protein level) (PubMed:11203704). Expression in adult hermaphrodites may be highest in the germ line (PubMed:11203704).</text>
</comment>
<comment type="disruption phenotype">
    <text evidence="3">RNAi-mediated knockdown causes multiple defects, including embryonic lethality, slow larval growth, abnormal tail morphology, constipation, abnormal vulva, and abnormal pharynx.</text>
</comment>
<comment type="caution">
    <text evidence="5 8">May not bind metals in vitro (PubMed:15165844). It is possible that some phenotypes due to mutant cu9 allele are due to deletion of predicted flanking non-coding RNA genes.</text>
</comment>
<accession>A0A5S9MMK5</accession>
<accession>H2KZM4</accession>
<accession>Q7Z1Q1</accession>
<accession>Q9U9Q9</accession>